<gene>
    <name type="primary">TP53</name>
    <name type="synonym">P53</name>
</gene>
<comment type="function">
    <text evidence="2 3">Multifunctional transcription factor that induces cell cycle arrest, DNA repair or apoptosis upon binding to its target DNA sequence. Acts as a tumor suppressor in many tumor types; induces growth arrest or apoptosis depending on the physiological circumstances and cell type. Negatively regulates cell division by controlling expression of a set of genes required for this process. One of the activated genes is an inhibitor of cyclin-dependent kinases. Apoptosis induction seems to be mediated either by stimulation of BAX and FAS antigen expression, or by repression of Bcl-2 expression. Its pro-apoptotic activity is activated via its interaction with PPP1R13B/ASPP1 or TP53BP2/ASPP2 (By similarity). However, this activity is inhibited when the interaction with PPP1R13B/ASPP1 or TP53BP2/ASPP2 is displaced by PPP1R13L/iASPP (By similarity). In cooperation with mitochondrial PPIF is involved in activating oxidative stress-induced necrosis; the function is largely independent of transcription. Prevents CDK7 kinase activity when associated to CAK complex in response to DNA damage, thus stopping cell cycle progression. Induces the transcription of long intergenic non-coding RNA p21 (lincRNA-p21) and lincRNA-Mkln1. LincRNA-p21 participates in TP53-dependent transcriptional repression leading to apoptosis and seems to have an effect on cell-cycle regulation. Regulates the circadian clock by repressing CLOCK-BMAL1-mediated transcriptional activation of PER2.</text>
</comment>
<comment type="cofactor">
    <cofactor evidence="1">
        <name>Zn(2+)</name>
        <dbReference type="ChEBI" id="CHEBI:29105"/>
    </cofactor>
    <text evidence="1">Binds 1 zinc ion per subunit.</text>
</comment>
<comment type="subunit">
    <text evidence="2 3 4">Forms homodimers and homotetramers (By similarity). Binds DNA as a homotetramer. Interacts with AXIN1. Probably part of a complex consisting of TP53, HIPK2 and AXIN1. Interacts with histone acetyltransferases EP300 and methyltransferases HRMT1L2 and CARM1, and recruits them to promoters. Interacts (via C-terminus) with TAF1; when TAF1 is part of the TFIID complex. Interacts with ING4; this interaction may be indirect. Found in a complex with CABLES1 and TP73. Interacts with HIPK1, HIPK2, and TP53INP1. Interacts with WWOX. Interacts with USP7 and SYVN1. Interacts with HSP90AB1. Interacts with CHD8; leading to recruit histone H1 and prevent transactivation activity. Interacts with ARMC10, BANP, CDKN2AIP, NUAK1, STK11/LKB1, UHRF2 and E4F. Interacts with YWHAZ; the interaction enhances TP53 transcriptional activity. Phosphorylation of YWHAZ on 'Ser-58' inhibits this interaction. Interacts (via DNA-binding domain) with MAML1 (via N-terminus). Interacts with MKRN1. Interacts with PML (via C-terminus). Interacts with MDM2; leading to ubiquitination and proteasomal degradation of TP53. Directly interacts with FBXO42; leading to ubiquitination and degradation of TP53. Interacts (phosphorylated at Ser-15 by ATM) with the phosphatase PP2A-PPP2R5C holoenzyme; regulates stress-induced TP53-dependent inhibition of cell proliferation. Interacts with PPP2R2A. Interacts with AURKA, DAXX, BRD7 and TRIM24. Interacts (when monomethylated at Lys-370) with L3MBTL1. Interacts with GRK5. Binds to the CAK complex (CDK7, cyclin H and MAT1) in response to DNA damage. Interacts with CDK5 in neurons. Interacts with AURKB, SETD2, UHRF2 and NOC2L. Interacts (via N-terminus) with PTK2/FAK1; this promotes ubiquitination by MDM2. Interacts with PTK2B/PYK2; this promotes ubiquitination by MDM2. Interacts with PRKCG. Interacts with PPIF; the association implicates preferentially tetrameric TP53, is induced by oxidative stress and is impaired by cyclosporin A (CsA). Interacts with SNAI1; the interaction induces SNAI1 degradation via MDM2-mediated ubiquitination and inhibits SNAI1-induced cell invasion. Interacts with UBC9. Interacts with ZNF385B; the interaction is direct. Interacts (via DNA-binding domain) with ZNF385A; the interaction is direct and enhances p53/TP53 transactivation functions on cell-cycle arrest target genes, resulting in growth arrest (By similarity). Interacts with ANKRD2. Interacts with RFFL and RNF34; involved in p53/TP53 ubiquitination. Interacts with MTA1 and COP1. Interacts with CCAR2 (via N-terminus). Interacts with MORC3. Interacts (via C-terminus) with POU4F2 (via C-terminus). Interacts (via oligomerization region) with NOP53; the interaction is direct and may prevent the MDM2-mediated proteasomal degradation of TP53. Interacts with AFG1L; mediates mitochondrial translocation of TP53. Interacts with UBD (By similarity). Interacts with TAF6 (By similarity). Interacts with C10orf90/FATS; the interaction inhibits binding of TP53 and MDM2 (By similarity). Interacts with NUPR1; interaction is stress-dependent. Forms a complex with EP300 and NUPR1; this complex binds CDKN1A promoter leading to transcriptional induction of CDKN1A (By similarity). Interacts with PRMT5 in response to DNA damage; the interaction is TTC5/STRAP dependent (By similarity). Interacts with PPP1R13L (via SH3 domain and ANK repeats); the interaction inhibits pro-apoptotic activity of p53/TP53 (By similarity). Interacts with PPP1R13B/ASPP1 and TP53BP2/ASPP2; the interactions promotes pro-apoptotic activity (By similarity). When phosphorylated at Ser-15, interacts with DDX3X and gamma-tubulin (By similarity). Interacts with KAT7/HBO1; leading to inhibit histone acetyltransferase activity of KAT7/HBO1 (By similarity). Interacts with S100A4; this interaction promotes TP53 degradation (By similarity). Interacts with TTC5/STRAP; the interaction may result in increased mitochondrial-dependent apoptosis (By similarity). Interacts with NQO1; this interaction is NADH-dependent, stabilizes TP53 in response to oxidative stress and protects it from ubiquitin-independent degradation by the 20S proteasome (By similarity). Interacts with DAZAP2 at TP53 target gene promoters; the interaction is triggered by DNA damage and leads to modulation of the expression of a subset of TP53 target genes, reducing DNA damage-induced cell death by limiting the expression of cell death-mediating TP53 target genes (By similarity). Interacts (via N-terminus) with ZNF768 (via zinc-finger domains); interaction might be facilitated by TP53 oligomerization state (By similarity). Forms a ternary complex with ALDOB and G6PD; this interaction is direct. ALDOB stabilizes the complex inhibiting G6PD activity and keeping oxidative pentose phosphate metabolism in check. Interacts with MORN3; the interactions mediate post-transcriptional modifications of TP53 by MDM2 and SIRT1 (By similarity). Interacts with HSPA9/MOT-2; the interaction promotes the degradation of TP53 (By similarity). Interacts with FBXO22; this interaction promotes TP53 proteasomal degradation (By similarity).</text>
</comment>
<comment type="subcellular location">
    <subcellularLocation>
        <location evidence="3">Cytoplasm</location>
    </subcellularLocation>
    <subcellularLocation>
        <location evidence="3">Nucleus</location>
    </subcellularLocation>
    <subcellularLocation>
        <location evidence="3">Nucleus</location>
        <location evidence="3">PML body</location>
    </subcellularLocation>
    <subcellularLocation>
        <location evidence="3">Endoplasmic reticulum</location>
    </subcellularLocation>
    <subcellularLocation>
        <location evidence="3">Mitochondrion matrix</location>
    </subcellularLocation>
    <subcellularLocation>
        <location evidence="3">Cytoplasm</location>
        <location evidence="3">Cytoskeleton</location>
        <location evidence="3">Microtubule organizing center</location>
        <location evidence="3">Centrosome</location>
    </subcellularLocation>
    <text evidence="3">Interaction with BANP promotes nuclear localization. Recruited into PML bodies together with CHEK2. Translocates to mitochondria upon oxidative stress. Translocates to mitochondria in response to mitomycin C treatment (By similarity). Competitive inhibition of TP53 interaction with HSPA9/MOT-2 by UBXN2A results in increased protein abundance and subsequent translocation of TP53 to the nucleus (By similarity).</text>
</comment>
<comment type="domain">
    <text evidence="3">The N-terminal and C-terminal disordered regions undergo liquid-liquid phase separation (LLPS) following homotetramerization and activation. Post-translational modifications, such as phosphorylation or lactylation affect the ability to undergo LLPS.</text>
</comment>
<comment type="domain">
    <text evidence="3">The nuclear export signal acts as a transcriptional repression domain. The TADI and TADII motifs (residues 17 to 25 and 48 to 56) correspond both to 9aaTAD motifs which are transactivation domains present in a large number of yeast and animal transcription factors.</text>
</comment>
<comment type="PTM">
    <text evidence="1 3">Phosphorylation on Ser residues mediates transcriptional activation. Phosphorylated on Thr-18 by VRK1, which may prevent the interaction with MDM2. Phosphorylated on Ser-20 by CHEK2 in response to DNA damage, which prevents ubiquitination by MDM2. Phosphorylated on Ser-20 by PLK3 in response to reactive oxygen species (ROS), promoting p53/TP53-mediated apoptosis. Phosphorylated on Ser-33 by CDK7 in a CAK complex in response to DNA damage. Phosphorylated by HIPK1. Stabilized by CDK5-mediated phosphorylation in response to genotoxic and oxidative stresses at Ser-15 and Ser-33, leading to accumulation of p53/TP53, particularly in the nucleus, thus inducing the transactivation of p53/TP53 target genes. Phosphorylated at Ser-303 and Ser-380 by CDK2 in response to DNA-damage. Phosphorylated on Ser-380 following UV but not gamma irradiation (By similarity). Phosphorylation at Ser-15 is required for interaction with DDX3X and gamma-tubulin (By similarity). Phosphorylation at Ser-380 regulates its ability to undergo liquid-liquid phase separation by increasing fluidity of TP53/p53 condensates (By similarity).</text>
</comment>
<comment type="PTM">
    <text evidence="3">Monomethylated at Lys-360 by SETD7, leading to stabilization and increased transcriptional activation. Monomethylated at Lys-358 by SMYD2, leading to decreased DNA-binding activity and subsequent transcriptional regulation activity. Lys-360 monomethylation prevents interaction with SMYD2 and subsequent monomethylation at Lys-358. Dimethylated at Lys-361 by EHMT1 and EHMT2. Monomethylated at Lys-370 by KMT5A, promoting interaction with L3MBTL1 and leading to repress transcriptional activity. Demethylation of dimethylated Lys-358 by KDM1A prevents interaction with TP53BP1 and represses TP53-mediated transcriptional activation (By similarity). Monomethylated at Arg-321 and dimethylated at Arg-323 and Arg-325 by PRMT5; methylation is increased after DNA damage and might possibly affect TP53 target gene specificity (By similarity).</text>
</comment>
<comment type="PTM">
    <text evidence="1">Sumoylated with SUMO1. Sumoylated at Lys-374 by UBC9 (By similarity).</text>
</comment>
<comment type="PTM">
    <text evidence="2 3">Ubiquitinated by MDM2 and SYVN1, which leads to proteasomal degradation. Ubiquitinated by RFWD3, which works in cooperation with MDM2 and may catalyze the formation of short polyubiquitin chains on p53/TP53 that are not targeted to the proteasome. Ubiquitinated by MKRN1, which leads to proteasomal degradation. Deubiquitinated by USP10, leading to stabilize it. Ubiquitinated by TRIM24, RFFL, RNF34 and RNF125, which leads to proteasomal degradation. Ubiquitination by TOPORS induces degradation. Deubiquitination by USP7, leading to stabilize it. Ubiquitinated by COP1, which leads to proteasomal degradation (By similarity). Ubiquitination and subsequent proteasomal degradation is negatively regulated by CCAR2 (By similarity). Polyubiquitinated by C10orf90/FATS, polyubiquitination is 'Lys-48'-linkage independent and non-proteolytic, leading to TP53 stabilization (By similarity). Deubiquitinated by USP3, leading to stabilization (By similarity). Ubiquitinated by MSL2, promoting its cytoplasmic localization (By similarity). Also ubiquitinated by the SCF(FBXO22)-KDMA4A complex; leading to proteasomal degradation (By similarity).</text>
</comment>
<comment type="PTM">
    <text evidence="3">Acetylation of Lys-370 by CREBBP enhances transcriptional activity. Acetylation of Lys-370 by EP300. Deacetylation of Lys-370 by SIRT1 impairs its ability to induce proapoptotic program and modulate cell senescence. Deacetylation by SIRT2 impairs its ability to induce transcription activation in a AKT-dependent manner. Acetylation at Lys-369 increases stability. Deacetylation at Lys-369 by SIRT6 decreases its stability, thereby regulating cell senescence. Acetylated at Lys-107 by KAT5, KAT6A and KAT8; regulating its ability to induce proapoptotic program.</text>
</comment>
<comment type="PTM">
    <text evidence="3">Lactylation by AARS1 prevents ability to undergo liquid-liquid phase separation (LLPS), thereby inhibiting transcription factor activity.</text>
</comment>
<comment type="disease">
    <text>p53 is found in increased amounts in a wide variety of transformed cells. p53 is frequently mutated or inactivated in many types of cancer.</text>
</comment>
<comment type="similarity">
    <text evidence="6">Belongs to the p53 family.</text>
</comment>
<reference key="1">
    <citation type="journal article" date="1998" name="Oncogene">
        <title>Isolation of canine p53 cDNA and detailed characterization of the full length canine p53 protein.</title>
        <authorList>
            <person name="Veldhoen N."/>
            <person name="Milner J."/>
        </authorList>
    </citation>
    <scope>NUCLEOTIDE SEQUENCE [MRNA]</scope>
    <source>
        <tissue>Leukocyte</tissue>
    </source>
</reference>
<reference key="2">
    <citation type="submission" date="1998-12" db="EMBL/GenBank/DDBJ databases">
        <title>Aberrations of p53 tumor suppressor gene in various spontaneous tumors in the dog.</title>
        <authorList>
            <person name="Setoguchi A."/>
            <person name="Sakai T."/>
            <person name="Okuda M."/>
            <person name="Minehata K."/>
            <person name="Yazawa M."/>
            <person name="Ishizaka T."/>
            <person name="Watari T."/>
            <person name="Hasagawa A."/>
            <person name="Tsujimoto H."/>
        </authorList>
    </citation>
    <scope>NUCLEOTIDE SEQUENCE [GENOMIC DNA]</scope>
    <source>
        <tissue>Spleen</tissue>
    </source>
</reference>
<reference key="3">
    <citation type="journal article" date="1995" name="Cancer Lett.">
        <title>Sequence analysis of canine p53 in the region of exons 3-8.</title>
        <authorList>
            <person name="Kraegel S.A."/>
            <person name="Pazzi K.A."/>
            <person name="Madewell B.R."/>
        </authorList>
    </citation>
    <scope>NUCLEOTIDE SEQUENCE [MRNA] OF 25-300</scope>
    <source>
        <strain>Beagle</strain>
    </source>
</reference>
<dbReference type="EMBL" id="AF060514">
    <property type="protein sequence ID" value="AAC16909.1"/>
    <property type="molecule type" value="mRNA"/>
</dbReference>
<dbReference type="EMBL" id="AB020761">
    <property type="protein sequence ID" value="BAA78379.1"/>
    <property type="molecule type" value="Genomic_DNA"/>
</dbReference>
<dbReference type="EMBL" id="S77819">
    <property type="protein sequence ID" value="AAB42022.1"/>
    <property type="molecule type" value="mRNA"/>
</dbReference>
<dbReference type="RefSeq" id="NP_001003210.1">
    <property type="nucleotide sequence ID" value="NM_001003210.1"/>
</dbReference>
<dbReference type="SMR" id="Q29537"/>
<dbReference type="BioGRID" id="139788">
    <property type="interactions" value="1"/>
</dbReference>
<dbReference type="FunCoup" id="Q29537">
    <property type="interactions" value="1013"/>
</dbReference>
<dbReference type="STRING" id="9615.ENSCAFP00000064590"/>
<dbReference type="iPTMnet" id="Q29537"/>
<dbReference type="PaxDb" id="9612-ENSCAFP00000024579"/>
<dbReference type="eggNOG" id="ENOG502QVY3">
    <property type="taxonomic scope" value="Eukaryota"/>
</dbReference>
<dbReference type="InParanoid" id="Q29537"/>
<dbReference type="OrthoDB" id="5915660at2759"/>
<dbReference type="Proteomes" id="UP000002254">
    <property type="component" value="Unplaced"/>
</dbReference>
<dbReference type="Proteomes" id="UP000694429">
    <property type="component" value="Unplaced"/>
</dbReference>
<dbReference type="Proteomes" id="UP000694542">
    <property type="component" value="Unplaced"/>
</dbReference>
<dbReference type="Proteomes" id="UP000805418">
    <property type="component" value="Unplaced"/>
</dbReference>
<dbReference type="GO" id="GO:0005813">
    <property type="term" value="C:centrosome"/>
    <property type="evidence" value="ECO:0000250"/>
    <property type="project" value="UniProtKB"/>
</dbReference>
<dbReference type="GO" id="GO:0005737">
    <property type="term" value="C:cytoplasm"/>
    <property type="evidence" value="ECO:0000250"/>
    <property type="project" value="UniProtKB"/>
</dbReference>
<dbReference type="GO" id="GO:0005783">
    <property type="term" value="C:endoplasmic reticulum"/>
    <property type="evidence" value="ECO:0007669"/>
    <property type="project" value="UniProtKB-SubCell"/>
</dbReference>
<dbReference type="GO" id="GO:0005759">
    <property type="term" value="C:mitochondrial matrix"/>
    <property type="evidence" value="ECO:0007669"/>
    <property type="project" value="UniProtKB-SubCell"/>
</dbReference>
<dbReference type="GO" id="GO:0005739">
    <property type="term" value="C:mitochondrion"/>
    <property type="evidence" value="ECO:0000250"/>
    <property type="project" value="UniProtKB"/>
</dbReference>
<dbReference type="GO" id="GO:0005730">
    <property type="term" value="C:nucleolus"/>
    <property type="evidence" value="ECO:0000250"/>
    <property type="project" value="UniProtKB"/>
</dbReference>
<dbReference type="GO" id="GO:0005634">
    <property type="term" value="C:nucleus"/>
    <property type="evidence" value="ECO:0000250"/>
    <property type="project" value="UniProtKB"/>
</dbReference>
<dbReference type="GO" id="GO:0016605">
    <property type="term" value="C:PML body"/>
    <property type="evidence" value="ECO:0007669"/>
    <property type="project" value="UniProtKB-SubCell"/>
</dbReference>
<dbReference type="GO" id="GO:0036310">
    <property type="term" value="F:ATP-dependent DNA/DNA annealing activity"/>
    <property type="evidence" value="ECO:0000250"/>
    <property type="project" value="UniProtKB"/>
</dbReference>
<dbReference type="GO" id="GO:0005507">
    <property type="term" value="F:copper ion binding"/>
    <property type="evidence" value="ECO:0000250"/>
    <property type="project" value="UniProtKB"/>
</dbReference>
<dbReference type="GO" id="GO:0003677">
    <property type="term" value="F:DNA binding"/>
    <property type="evidence" value="ECO:0000250"/>
    <property type="project" value="UniProtKB"/>
</dbReference>
<dbReference type="GO" id="GO:0000981">
    <property type="term" value="F:DNA-binding transcription factor activity, RNA polymerase II-specific"/>
    <property type="evidence" value="ECO:0000250"/>
    <property type="project" value="UniProtKB"/>
</dbReference>
<dbReference type="GO" id="GO:0140693">
    <property type="term" value="F:molecular condensate scaffold activity"/>
    <property type="evidence" value="ECO:0000250"/>
    <property type="project" value="UniProtKB"/>
</dbReference>
<dbReference type="GO" id="GO:1990841">
    <property type="term" value="F:promoter-specific chromatin binding"/>
    <property type="evidence" value="ECO:0000250"/>
    <property type="project" value="UniProtKB"/>
</dbReference>
<dbReference type="GO" id="GO:0000978">
    <property type="term" value="F:RNA polymerase II cis-regulatory region sequence-specific DNA binding"/>
    <property type="evidence" value="ECO:0000250"/>
    <property type="project" value="UniProtKB"/>
</dbReference>
<dbReference type="GO" id="GO:0090398">
    <property type="term" value="P:cellular senescence"/>
    <property type="evidence" value="ECO:0000250"/>
    <property type="project" value="UniProtKB"/>
</dbReference>
<dbReference type="GO" id="GO:0048512">
    <property type="term" value="P:circadian behavior"/>
    <property type="evidence" value="ECO:0000250"/>
    <property type="project" value="UniProtKB"/>
</dbReference>
<dbReference type="GO" id="GO:0006974">
    <property type="term" value="P:DNA damage response"/>
    <property type="evidence" value="ECO:0000250"/>
    <property type="project" value="UniProtKB"/>
</dbReference>
<dbReference type="GO" id="GO:0043153">
    <property type="term" value="P:entrainment of circadian clock by photoperiod"/>
    <property type="evidence" value="ECO:0000250"/>
    <property type="project" value="UniProtKB"/>
</dbReference>
<dbReference type="GO" id="GO:0030308">
    <property type="term" value="P:negative regulation of cell growth"/>
    <property type="evidence" value="ECO:0000250"/>
    <property type="project" value="UniProtKB"/>
</dbReference>
<dbReference type="GO" id="GO:0045892">
    <property type="term" value="P:negative regulation of DNA-templated transcription"/>
    <property type="evidence" value="ECO:0000250"/>
    <property type="project" value="UniProtKB"/>
</dbReference>
<dbReference type="GO" id="GO:0006289">
    <property type="term" value="P:nucleotide-excision repair"/>
    <property type="evidence" value="ECO:0000250"/>
    <property type="project" value="UniProtKB"/>
</dbReference>
<dbReference type="GO" id="GO:0097252">
    <property type="term" value="P:oligodendrocyte apoptotic process"/>
    <property type="evidence" value="ECO:0000250"/>
    <property type="project" value="UniProtKB"/>
</dbReference>
<dbReference type="GO" id="GO:0043065">
    <property type="term" value="P:positive regulation of apoptotic process"/>
    <property type="evidence" value="ECO:0000250"/>
    <property type="project" value="UniProtKB"/>
</dbReference>
<dbReference type="GO" id="GO:2001244">
    <property type="term" value="P:positive regulation of intrinsic apoptotic signaling pathway"/>
    <property type="evidence" value="ECO:0000250"/>
    <property type="project" value="UniProtKB"/>
</dbReference>
<dbReference type="GO" id="GO:0045944">
    <property type="term" value="P:positive regulation of transcription by RNA polymerase II"/>
    <property type="evidence" value="ECO:0000314"/>
    <property type="project" value="CACAO"/>
</dbReference>
<dbReference type="GO" id="GO:0051262">
    <property type="term" value="P:protein tetramerization"/>
    <property type="evidence" value="ECO:0007669"/>
    <property type="project" value="InterPro"/>
</dbReference>
<dbReference type="GO" id="GO:0006357">
    <property type="term" value="P:regulation of transcription by RNA polymerase II"/>
    <property type="evidence" value="ECO:0000318"/>
    <property type="project" value="GO_Central"/>
</dbReference>
<dbReference type="CDD" id="cd08367">
    <property type="entry name" value="P53"/>
    <property type="match status" value="1"/>
</dbReference>
<dbReference type="FunFam" id="2.60.40.720:FF:000003">
    <property type="entry name" value="Cellular tumor antigen p53"/>
    <property type="match status" value="1"/>
</dbReference>
<dbReference type="FunFam" id="4.10.170.10:FF:000003">
    <property type="entry name" value="Cellular tumor antigen p53"/>
    <property type="match status" value="1"/>
</dbReference>
<dbReference type="Gene3D" id="2.60.40.720">
    <property type="match status" value="1"/>
</dbReference>
<dbReference type="Gene3D" id="6.10.50.20">
    <property type="match status" value="1"/>
</dbReference>
<dbReference type="Gene3D" id="4.10.170.10">
    <property type="entry name" value="p53-like tetramerisation domain"/>
    <property type="match status" value="1"/>
</dbReference>
<dbReference type="InterPro" id="IPR008967">
    <property type="entry name" value="p53-like_TF_DNA-bd_sf"/>
</dbReference>
<dbReference type="InterPro" id="IPR012346">
    <property type="entry name" value="p53/RUNT-type_TF_DNA-bd_sf"/>
</dbReference>
<dbReference type="InterPro" id="IPR011615">
    <property type="entry name" value="p53_DNA-bd"/>
</dbReference>
<dbReference type="InterPro" id="IPR036674">
    <property type="entry name" value="p53_tetramer_sf"/>
</dbReference>
<dbReference type="InterPro" id="IPR010991">
    <property type="entry name" value="p53_tetrameristn"/>
</dbReference>
<dbReference type="InterPro" id="IPR013872">
    <property type="entry name" value="p53_transactivation_domain"/>
</dbReference>
<dbReference type="InterPro" id="IPR002117">
    <property type="entry name" value="p53_tumour_suppressor"/>
</dbReference>
<dbReference type="PANTHER" id="PTHR11447">
    <property type="entry name" value="CELLULAR TUMOR ANTIGEN P53"/>
    <property type="match status" value="1"/>
</dbReference>
<dbReference type="PANTHER" id="PTHR11447:SF6">
    <property type="entry name" value="CELLULAR TUMOR ANTIGEN P53"/>
    <property type="match status" value="1"/>
</dbReference>
<dbReference type="Pfam" id="PF00870">
    <property type="entry name" value="P53"/>
    <property type="match status" value="1"/>
</dbReference>
<dbReference type="Pfam" id="PF08563">
    <property type="entry name" value="P53_TAD"/>
    <property type="match status" value="1"/>
</dbReference>
<dbReference type="Pfam" id="PF07710">
    <property type="entry name" value="P53_tetramer"/>
    <property type="match status" value="1"/>
</dbReference>
<dbReference type="PRINTS" id="PR00386">
    <property type="entry name" value="P53SUPPRESSR"/>
</dbReference>
<dbReference type="SUPFAM" id="SSF47719">
    <property type="entry name" value="p53 tetramerization domain"/>
    <property type="match status" value="1"/>
</dbReference>
<dbReference type="SUPFAM" id="SSF49417">
    <property type="entry name" value="p53-like transcription factors"/>
    <property type="match status" value="1"/>
</dbReference>
<dbReference type="PROSITE" id="PS00348">
    <property type="entry name" value="P53"/>
    <property type="match status" value="1"/>
</dbReference>
<sequence length="381" mass="42486">MEESQSELNIDPPLSQETFSELWNLLPENNVLSSELCPAVDELLLPESVVNWLDEDSDDAPRMPATSAPTAPGPAPSWPLSSSVPSPKTYPGTYGFRLGFLHSGTAKSVTWTYSPLLNKLFCQLAKTCPVQLWVSSPPPPNTCVRAMAIYKKSEFVTEVVRRCPHHERCSDSSDGLAPPQHLIRVEGNLRAKYLDDRNTFRHSVVVPYEPPEVGSDYTTIHYNYMCNSSCMGGMNRRPILTIITLEDSSGNVLGRNSFEVRVCACPGRDRRTEEENFHKKGEPCPEPPPGSTKRALPPSTSSSPPQKKKPLDGEYFTLQIRGRERYEMFRNLNEALELKDAQSGKEPGGSRAHSSHLKAKKGQSTSRHKKLMFKREGLDSD</sequence>
<proteinExistence type="evidence at transcript level"/>
<protein>
    <recommendedName>
        <fullName>Cellular tumor antigen p53</fullName>
    </recommendedName>
    <alternativeName>
        <fullName>Tumor suppressor p53</fullName>
    </alternativeName>
</protein>
<evidence type="ECO:0000250" key="1"/>
<evidence type="ECO:0000250" key="2">
    <source>
        <dbReference type="UniProtKB" id="P02340"/>
    </source>
</evidence>
<evidence type="ECO:0000250" key="3">
    <source>
        <dbReference type="UniProtKB" id="P04637"/>
    </source>
</evidence>
<evidence type="ECO:0000250" key="4">
    <source>
        <dbReference type="UniProtKB" id="P10361"/>
    </source>
</evidence>
<evidence type="ECO:0000256" key="5">
    <source>
        <dbReference type="SAM" id="MobiDB-lite"/>
    </source>
</evidence>
<evidence type="ECO:0000305" key="6"/>
<keyword id="KW-0007">Acetylation</keyword>
<keyword id="KW-0010">Activator</keyword>
<keyword id="KW-0053">Apoptosis</keyword>
<keyword id="KW-0090">Biological rhythms</keyword>
<keyword id="KW-0131">Cell cycle</keyword>
<keyword id="KW-0963">Cytoplasm</keyword>
<keyword id="KW-0206">Cytoskeleton</keyword>
<keyword id="KW-0238">DNA-binding</keyword>
<keyword id="KW-0256">Endoplasmic reticulum</keyword>
<keyword id="KW-1017">Isopeptide bond</keyword>
<keyword id="KW-0479">Metal-binding</keyword>
<keyword id="KW-0488">Methylation</keyword>
<keyword id="KW-0496">Mitochondrion</keyword>
<keyword id="KW-1210">Necrosis</keyword>
<keyword id="KW-0539">Nucleus</keyword>
<keyword id="KW-0597">Phosphoprotein</keyword>
<keyword id="KW-1185">Reference proteome</keyword>
<keyword id="KW-0678">Repressor</keyword>
<keyword id="KW-0804">Transcription</keyword>
<keyword id="KW-0805">Transcription regulation</keyword>
<keyword id="KW-0043">Tumor suppressor</keyword>
<keyword id="KW-0832">Ubl conjugation</keyword>
<keyword id="KW-0862">Zinc</keyword>
<organism>
    <name type="scientific">Canis lupus familiaris</name>
    <name type="common">Dog</name>
    <name type="synonym">Canis familiaris</name>
    <dbReference type="NCBI Taxonomy" id="9615"/>
    <lineage>
        <taxon>Eukaryota</taxon>
        <taxon>Metazoa</taxon>
        <taxon>Chordata</taxon>
        <taxon>Craniata</taxon>
        <taxon>Vertebrata</taxon>
        <taxon>Euteleostomi</taxon>
        <taxon>Mammalia</taxon>
        <taxon>Eutheria</taxon>
        <taxon>Laurasiatheria</taxon>
        <taxon>Carnivora</taxon>
        <taxon>Caniformia</taxon>
        <taxon>Canidae</taxon>
        <taxon>Canis</taxon>
    </lineage>
</organism>
<name>P53_CANLF</name>
<accession>Q29537</accession>
<accession>Q9TV78</accession>
<feature type="chain" id="PRO_0000185695" description="Cellular tumor antigen p53">
    <location>
        <begin position="1"/>
        <end position="381"/>
    </location>
</feature>
<feature type="DNA-binding region" evidence="3">
    <location>
        <begin position="89"/>
        <end position="280"/>
    </location>
</feature>
<feature type="region of interest" description="Interaction with CCAR2" evidence="3">
    <location>
        <begin position="1"/>
        <end position="308"/>
    </location>
</feature>
<feature type="region of interest" description="Transcription activation (acidic)">
    <location>
        <begin position="1"/>
        <end position="44"/>
    </location>
</feature>
<feature type="region of interest" description="Disordered" evidence="5">
    <location>
        <begin position="55"/>
        <end position="84"/>
    </location>
</feature>
<feature type="region of interest" description="Interaction with WWOX" evidence="1">
    <location>
        <begin position="63"/>
        <end position="97"/>
    </location>
</feature>
<feature type="region of interest" description="Interaction with HIPK1" evidence="1">
    <location>
        <begin position="87"/>
        <end position="358"/>
    </location>
</feature>
<feature type="region of interest" description="Required for interaction with ZNF385A" evidence="1">
    <location>
        <begin position="87"/>
        <end position="288"/>
    </location>
</feature>
<feature type="region of interest" description="Required for interaction with FBXO42" evidence="1">
    <location>
        <begin position="100"/>
        <end position="224"/>
    </location>
</feature>
<feature type="region of interest" description="Interaction with AXIN1" evidence="1">
    <location>
        <begin position="103"/>
        <end position="280"/>
    </location>
</feature>
<feature type="region of interest" description="Interaction with E4F1" evidence="1">
    <location>
        <begin position="244"/>
        <end position="282"/>
    </location>
</feature>
<feature type="region of interest" description="Interaction with DNA" evidence="1">
    <location>
        <begin position="261"/>
        <end position="268"/>
    </location>
</feature>
<feature type="region of interest" description="Disordered" evidence="5">
    <location>
        <begin position="270"/>
        <end position="313"/>
    </location>
</feature>
<feature type="region of interest" description="Interaction with HIPK2" evidence="1">
    <location>
        <begin position="307"/>
        <end position="348"/>
    </location>
</feature>
<feature type="region of interest" description="Oligomerization">
    <location>
        <begin position="313"/>
        <end position="344"/>
    </location>
</feature>
<feature type="region of interest" description="Disordered" evidence="5">
    <location>
        <begin position="338"/>
        <end position="381"/>
    </location>
</feature>
<feature type="region of interest" description="Interaction with USP7" evidence="1">
    <location>
        <begin position="347"/>
        <end position="351"/>
    </location>
</feature>
<feature type="region of interest" description="Basic (repression of DNA-binding)">
    <location>
        <begin position="356"/>
        <end position="375"/>
    </location>
</feature>
<feature type="short sequence motif" description="Bipartite nuclear localization signal" evidence="1">
    <location>
        <begin position="293"/>
        <end position="309"/>
    </location>
</feature>
<feature type="short sequence motif" description="Nuclear export signal" evidence="1">
    <location>
        <begin position="327"/>
        <end position="338"/>
    </location>
</feature>
<feature type="short sequence motif" description="[KR]-[STA]-K motif">
    <location>
        <begin position="358"/>
        <end position="360"/>
    </location>
</feature>
<feature type="compositionally biased region" description="Basic and acidic residues" evidence="5">
    <location>
        <begin position="270"/>
        <end position="283"/>
    </location>
</feature>
<feature type="compositionally biased region" description="Basic residues" evidence="5">
    <location>
        <begin position="353"/>
        <end position="372"/>
    </location>
</feature>
<feature type="binding site" evidence="3">
    <location>
        <position position="163"/>
    </location>
    <ligand>
        <name>Zn(2+)</name>
        <dbReference type="ChEBI" id="CHEBI:29105"/>
    </ligand>
</feature>
<feature type="binding site" evidence="3">
    <location>
        <position position="166"/>
    </location>
    <ligand>
        <name>Zn(2+)</name>
        <dbReference type="ChEBI" id="CHEBI:29105"/>
    </ligand>
</feature>
<feature type="binding site" evidence="3">
    <location>
        <position position="226"/>
    </location>
    <ligand>
        <name>Zn(2+)</name>
        <dbReference type="ChEBI" id="CHEBI:29105"/>
    </ligand>
</feature>
<feature type="binding site" evidence="3">
    <location>
        <position position="230"/>
    </location>
    <ligand>
        <name>Zn(2+)</name>
        <dbReference type="ChEBI" id="CHEBI:29105"/>
    </ligand>
</feature>
<feature type="site" description="Interaction with DNA" evidence="3">
    <location>
        <position position="107"/>
    </location>
</feature>
<feature type="modified residue" description="Phosphoserine; by CDK5, PRPK, AMPK, NUAK1 and ATM" evidence="3">
    <location>
        <position position="15"/>
    </location>
</feature>
<feature type="modified residue" description="Phosphothreonine; by CK1, VRK1 and VRK2" evidence="3">
    <location>
        <position position="18"/>
    </location>
</feature>
<feature type="modified residue" description="Phosphoserine; by CHEK2, CK1 and PLK3" evidence="3">
    <location>
        <position position="20"/>
    </location>
</feature>
<feature type="modified residue" description="Phosphoserine; by CDK5 and CDK7" evidence="3">
    <location>
        <position position="33"/>
    </location>
</feature>
<feature type="modified residue" description="N6-acetyllysine" evidence="3">
    <location>
        <position position="107"/>
    </location>
</feature>
<feature type="modified residue" description="N6-lactoyllysine" evidence="3">
    <location>
        <position position="107"/>
    </location>
</feature>
<feature type="modified residue" description="N6-lactoyllysine" evidence="3">
    <location>
        <position position="126"/>
    </location>
</feature>
<feature type="modified residue" description="Phosphoserine; by AURKB" evidence="3">
    <location>
        <position position="170"/>
    </location>
</feature>
<feature type="modified residue" description="Phosphoserine; by AURKB" evidence="3">
    <location>
        <position position="257"/>
    </location>
</feature>
<feature type="modified residue" description="Phosphothreonine; by AURKB" evidence="3">
    <location>
        <position position="272"/>
    </location>
</feature>
<feature type="modified residue" description="N6-acetyllysine" evidence="3">
    <location>
        <position position="293"/>
    </location>
</feature>
<feature type="modified residue" description="Phosphoserine; by AURKA, CDK1 and CDK2" evidence="3">
    <location>
        <position position="303"/>
    </location>
</feature>
<feature type="modified residue" description="N6-acetyllysine" evidence="2">
    <location>
        <position position="309"/>
    </location>
</feature>
<feature type="modified residue" description="Omega-N-methylarginine" evidence="3">
    <location>
        <position position="321"/>
    </location>
</feature>
<feature type="modified residue" description="Symmetric dimethylarginine" evidence="3">
    <location>
        <position position="323"/>
    </location>
</feature>
<feature type="modified residue" description="Symmetric dimethylarginine" evidence="3">
    <location>
        <position position="325"/>
    </location>
</feature>
<feature type="modified residue" description="N6,N6-dimethyllysine; alternate" evidence="3">
    <location>
        <position position="358"/>
    </location>
</feature>
<feature type="modified residue" description="N6-methyllysine; by SMYD2; alternate" evidence="3">
    <location>
        <position position="358"/>
    </location>
</feature>
<feature type="modified residue" description="N6-methyllysine; by SETD7" evidence="3">
    <location>
        <position position="360"/>
    </location>
</feature>
<feature type="modified residue" description="N6,N6-dimethyllysine; by EHMT1 and EHMT2; alternate" evidence="3">
    <location>
        <position position="361"/>
    </location>
</feature>
<feature type="modified residue" description="N6-acetyllysine; alternate" evidence="3">
    <location>
        <position position="361"/>
    </location>
</feature>
<feature type="modified residue" description="N6-acetyllysine" evidence="3">
    <location>
        <position position="369"/>
    </location>
</feature>
<feature type="modified residue" description="N6,N6-dimethyllysine; alternate" evidence="3">
    <location>
        <position position="370"/>
    </location>
</feature>
<feature type="modified residue" description="N6-acetyllysine; alternate" evidence="3">
    <location>
        <position position="370"/>
    </location>
</feature>
<feature type="modified residue" description="N6-methyllysine; by KMT5A; alternate" evidence="3">
    <location>
        <position position="370"/>
    </location>
</feature>
<feature type="modified residue" description="Phosphoserine; by CK2, CDK2 and NUAK1" evidence="3">
    <location>
        <position position="380"/>
    </location>
</feature>
<feature type="cross-link" description="Glycyl lysine isopeptide (Lys-Gly) (interchain with G-Cter in ubiquitin)" evidence="3">
    <location>
        <position position="279"/>
    </location>
</feature>
<feature type="cross-link" description="Glycyl lysine isopeptide (Lys-Gly) (interchain with G-Cter in ubiquitin)" evidence="3">
    <location>
        <position position="280"/>
    </location>
</feature>
<feature type="cross-link" description="Glycyl lysine isopeptide (Lys-Gly) (interchain with G-Cter in ubiquitin)" evidence="3">
    <location>
        <position position="339"/>
    </location>
</feature>
<feature type="cross-link" description="Glycyl lysine isopeptide (Lys-Gly) (interchain with G-Cter in ubiquitin)" evidence="3">
    <location>
        <position position="345"/>
    </location>
</feature>
<feature type="cross-link" description="Glycyl lysine isopeptide (Lys-Gly) (interchain with G-Cter in SUMO)" evidence="1">
    <location>
        <position position="374"/>
    </location>
</feature>
<feature type="sequence conflict" description="In Ref. 2." evidence="6" ref="2">
    <original>MEES</original>
    <variation>MQEP</variation>
    <location>
        <begin position="1"/>
        <end position="4"/>
    </location>
</feature>
<feature type="sequence conflict" description="In Ref. 2; BAA78379." evidence="6" ref="2">
    <original>L</original>
    <variation>P</variation>
    <location>
        <position position="378"/>
    </location>
</feature>